<organism>
    <name type="scientific">Rickettsia canadensis (strain McKiel)</name>
    <dbReference type="NCBI Taxonomy" id="293613"/>
    <lineage>
        <taxon>Bacteria</taxon>
        <taxon>Pseudomonadati</taxon>
        <taxon>Pseudomonadota</taxon>
        <taxon>Alphaproteobacteria</taxon>
        <taxon>Rickettsiales</taxon>
        <taxon>Rickettsiaceae</taxon>
        <taxon>Rickettsieae</taxon>
        <taxon>Rickettsia</taxon>
        <taxon>belli group</taxon>
    </lineage>
</organism>
<accession>A8EYM5</accession>
<protein>
    <recommendedName>
        <fullName evidence="1">ATP-dependent Clp protease proteolytic subunit</fullName>
        <ecNumber evidence="1">3.4.21.92</ecNumber>
    </recommendedName>
    <alternativeName>
        <fullName evidence="1">Endopeptidase Clp</fullName>
    </alternativeName>
</protein>
<name>CLPP_RICCK</name>
<reference key="1">
    <citation type="submission" date="2007-09" db="EMBL/GenBank/DDBJ databases">
        <title>Complete genome sequence of Rickettsia canadensis.</title>
        <authorList>
            <person name="Madan A."/>
            <person name="Fahey J."/>
            <person name="Helton E."/>
            <person name="Ketteman M."/>
            <person name="Madan A."/>
            <person name="Rodrigues S."/>
            <person name="Sanchez A."/>
            <person name="Whiting M."/>
            <person name="Dasch G."/>
            <person name="Eremeeva M."/>
        </authorList>
    </citation>
    <scope>NUCLEOTIDE SEQUENCE [LARGE SCALE GENOMIC DNA]</scope>
    <source>
        <strain>McKiel</strain>
    </source>
</reference>
<feature type="chain" id="PRO_1000026122" description="ATP-dependent Clp protease proteolytic subunit">
    <location>
        <begin position="1"/>
        <end position="201"/>
    </location>
</feature>
<feature type="active site" description="Nucleophile" evidence="1">
    <location>
        <position position="98"/>
    </location>
</feature>
<feature type="active site" evidence="1">
    <location>
        <position position="123"/>
    </location>
</feature>
<keyword id="KW-0963">Cytoplasm</keyword>
<keyword id="KW-0378">Hydrolase</keyword>
<keyword id="KW-0645">Protease</keyword>
<keyword id="KW-0720">Serine protease</keyword>
<comment type="function">
    <text evidence="1">Cleaves peptides in various proteins in a process that requires ATP hydrolysis. Has a chymotrypsin-like activity. Plays a major role in the degradation of misfolded proteins.</text>
</comment>
<comment type="catalytic activity">
    <reaction evidence="1">
        <text>Hydrolysis of proteins to small peptides in the presence of ATP and magnesium. alpha-casein is the usual test substrate. In the absence of ATP, only oligopeptides shorter than five residues are hydrolyzed (such as succinyl-Leu-Tyr-|-NHMec, and Leu-Tyr-Leu-|-Tyr-Trp, in which cleavage of the -Tyr-|-Leu- and -Tyr-|-Trp bonds also occurs).</text>
        <dbReference type="EC" id="3.4.21.92"/>
    </reaction>
</comment>
<comment type="subunit">
    <text evidence="1">Fourteen ClpP subunits assemble into 2 heptameric rings which stack back to back to give a disk-like structure with a central cavity, resembling the structure of eukaryotic proteasomes.</text>
</comment>
<comment type="subcellular location">
    <subcellularLocation>
        <location evidence="1">Cytoplasm</location>
    </subcellularLocation>
</comment>
<comment type="similarity">
    <text evidence="1">Belongs to the peptidase S14 family.</text>
</comment>
<evidence type="ECO:0000255" key="1">
    <source>
        <dbReference type="HAMAP-Rule" id="MF_00444"/>
    </source>
</evidence>
<proteinExistence type="inferred from homology"/>
<dbReference type="EC" id="3.4.21.92" evidence="1"/>
<dbReference type="EMBL" id="CP000409">
    <property type="protein sequence ID" value="ABV73458.1"/>
    <property type="molecule type" value="Genomic_DNA"/>
</dbReference>
<dbReference type="RefSeq" id="WP_012148655.1">
    <property type="nucleotide sequence ID" value="NC_009879.1"/>
</dbReference>
<dbReference type="SMR" id="A8EYM5"/>
<dbReference type="STRING" id="293613.A1E_02570"/>
<dbReference type="MEROPS" id="S14.001"/>
<dbReference type="KEGG" id="rcm:A1E_02570"/>
<dbReference type="eggNOG" id="COG0740">
    <property type="taxonomic scope" value="Bacteria"/>
</dbReference>
<dbReference type="HOGENOM" id="CLU_058707_3_3_5"/>
<dbReference type="Proteomes" id="UP000007056">
    <property type="component" value="Chromosome"/>
</dbReference>
<dbReference type="GO" id="GO:0005737">
    <property type="term" value="C:cytoplasm"/>
    <property type="evidence" value="ECO:0007669"/>
    <property type="project" value="UniProtKB-SubCell"/>
</dbReference>
<dbReference type="GO" id="GO:0009368">
    <property type="term" value="C:endopeptidase Clp complex"/>
    <property type="evidence" value="ECO:0007669"/>
    <property type="project" value="TreeGrafter"/>
</dbReference>
<dbReference type="GO" id="GO:0004176">
    <property type="term" value="F:ATP-dependent peptidase activity"/>
    <property type="evidence" value="ECO:0007669"/>
    <property type="project" value="InterPro"/>
</dbReference>
<dbReference type="GO" id="GO:0051117">
    <property type="term" value="F:ATPase binding"/>
    <property type="evidence" value="ECO:0007669"/>
    <property type="project" value="TreeGrafter"/>
</dbReference>
<dbReference type="GO" id="GO:0004252">
    <property type="term" value="F:serine-type endopeptidase activity"/>
    <property type="evidence" value="ECO:0007669"/>
    <property type="project" value="UniProtKB-UniRule"/>
</dbReference>
<dbReference type="GO" id="GO:0006515">
    <property type="term" value="P:protein quality control for misfolded or incompletely synthesized proteins"/>
    <property type="evidence" value="ECO:0007669"/>
    <property type="project" value="TreeGrafter"/>
</dbReference>
<dbReference type="CDD" id="cd07017">
    <property type="entry name" value="S14_ClpP_2"/>
    <property type="match status" value="1"/>
</dbReference>
<dbReference type="FunFam" id="3.90.226.10:FF:000001">
    <property type="entry name" value="ATP-dependent Clp protease proteolytic subunit"/>
    <property type="match status" value="1"/>
</dbReference>
<dbReference type="Gene3D" id="3.90.226.10">
    <property type="entry name" value="2-enoyl-CoA Hydratase, Chain A, domain 1"/>
    <property type="match status" value="1"/>
</dbReference>
<dbReference type="HAMAP" id="MF_00444">
    <property type="entry name" value="ClpP"/>
    <property type="match status" value="1"/>
</dbReference>
<dbReference type="InterPro" id="IPR001907">
    <property type="entry name" value="ClpP"/>
</dbReference>
<dbReference type="InterPro" id="IPR029045">
    <property type="entry name" value="ClpP/crotonase-like_dom_sf"/>
</dbReference>
<dbReference type="InterPro" id="IPR023562">
    <property type="entry name" value="ClpP/TepA"/>
</dbReference>
<dbReference type="InterPro" id="IPR033135">
    <property type="entry name" value="ClpP_His_AS"/>
</dbReference>
<dbReference type="InterPro" id="IPR018215">
    <property type="entry name" value="ClpP_Ser_AS"/>
</dbReference>
<dbReference type="NCBIfam" id="TIGR00493">
    <property type="entry name" value="clpP"/>
    <property type="match status" value="1"/>
</dbReference>
<dbReference type="NCBIfam" id="NF001368">
    <property type="entry name" value="PRK00277.1"/>
    <property type="match status" value="1"/>
</dbReference>
<dbReference type="NCBIfam" id="NF009205">
    <property type="entry name" value="PRK12553.1"/>
    <property type="match status" value="1"/>
</dbReference>
<dbReference type="PANTHER" id="PTHR10381">
    <property type="entry name" value="ATP-DEPENDENT CLP PROTEASE PROTEOLYTIC SUBUNIT"/>
    <property type="match status" value="1"/>
</dbReference>
<dbReference type="PANTHER" id="PTHR10381:SF70">
    <property type="entry name" value="ATP-DEPENDENT CLP PROTEASE PROTEOLYTIC SUBUNIT"/>
    <property type="match status" value="1"/>
</dbReference>
<dbReference type="Pfam" id="PF00574">
    <property type="entry name" value="CLP_protease"/>
    <property type="match status" value="1"/>
</dbReference>
<dbReference type="PRINTS" id="PR00127">
    <property type="entry name" value="CLPPROTEASEP"/>
</dbReference>
<dbReference type="SUPFAM" id="SSF52096">
    <property type="entry name" value="ClpP/crotonase"/>
    <property type="match status" value="1"/>
</dbReference>
<dbReference type="PROSITE" id="PS00382">
    <property type="entry name" value="CLP_PROTEASE_HIS"/>
    <property type="match status" value="1"/>
</dbReference>
<dbReference type="PROSITE" id="PS00381">
    <property type="entry name" value="CLP_PROTEASE_SER"/>
    <property type="match status" value="1"/>
</dbReference>
<sequence length="201" mass="22566">MSYVPIVIEQTSRGERAYDIYSRLLKERIIFVCSTVEDHMANLIVAQLLFLEAENPKKDIYMYINSPGGVVTAGLAIYDTMQYIKPKVATLCIGQACSMGSFLLCGGEKGMRYSLPHSRIMIHQPSGGYQGQATDIEIHAQETLKIKRLLNELYSKHTGQDVKHIEKSMERDNFMSPEEAKKFGIVDNIISSRNATGLLTK</sequence>
<gene>
    <name evidence="1" type="primary">clpP</name>
    <name type="ordered locus">A1E_02570</name>
</gene>